<feature type="chain" id="PRO_1000082440" description="GMP reductase">
    <location>
        <begin position="1"/>
        <end position="347"/>
    </location>
</feature>
<feature type="active site" description="Thioimidate intermediate" evidence="1">
    <location>
        <position position="186"/>
    </location>
</feature>
<feature type="binding site" evidence="1">
    <location>
        <begin position="108"/>
        <end position="131"/>
    </location>
    <ligand>
        <name>NADP(+)</name>
        <dbReference type="ChEBI" id="CHEBI:58349"/>
    </ligand>
</feature>
<feature type="binding site" evidence="1">
    <location>
        <position position="181"/>
    </location>
    <ligand>
        <name>K(+)</name>
        <dbReference type="ChEBI" id="CHEBI:29103"/>
    </ligand>
</feature>
<feature type="binding site" evidence="1">
    <location>
        <position position="183"/>
    </location>
    <ligand>
        <name>K(+)</name>
        <dbReference type="ChEBI" id="CHEBI:29103"/>
    </ligand>
</feature>
<feature type="binding site" evidence="1">
    <location>
        <begin position="216"/>
        <end position="239"/>
    </location>
    <ligand>
        <name>NADP(+)</name>
        <dbReference type="ChEBI" id="CHEBI:58349"/>
    </ligand>
</feature>
<proteinExistence type="inferred from homology"/>
<gene>
    <name evidence="1" type="primary">guaC</name>
    <name type="ordered locus">SPAB_00176</name>
</gene>
<name>GUAC_SALPB</name>
<keyword id="KW-0479">Metal-binding</keyword>
<keyword id="KW-0521">NADP</keyword>
<keyword id="KW-0560">Oxidoreductase</keyword>
<keyword id="KW-0630">Potassium</keyword>
<accession>A9MZN3</accession>
<reference key="1">
    <citation type="submission" date="2007-11" db="EMBL/GenBank/DDBJ databases">
        <authorList>
            <consortium name="The Salmonella enterica serovar Paratyphi B Genome Sequencing Project"/>
            <person name="McClelland M."/>
            <person name="Sanderson E.K."/>
            <person name="Porwollik S."/>
            <person name="Spieth J."/>
            <person name="Clifton W.S."/>
            <person name="Fulton R."/>
            <person name="Cordes M."/>
            <person name="Wollam A."/>
            <person name="Shah N."/>
            <person name="Pepin K."/>
            <person name="Bhonagiri V."/>
            <person name="Nash W."/>
            <person name="Johnson M."/>
            <person name="Thiruvilangam P."/>
            <person name="Wilson R."/>
        </authorList>
    </citation>
    <scope>NUCLEOTIDE SEQUENCE [LARGE SCALE GENOMIC DNA]</scope>
    <source>
        <strain>ATCC BAA-1250 / SPB7</strain>
    </source>
</reference>
<dbReference type="EC" id="1.7.1.7" evidence="1"/>
<dbReference type="EMBL" id="CP000886">
    <property type="protein sequence ID" value="ABX65618.1"/>
    <property type="molecule type" value="Genomic_DNA"/>
</dbReference>
<dbReference type="RefSeq" id="WP_001217363.1">
    <property type="nucleotide sequence ID" value="NC_010102.1"/>
</dbReference>
<dbReference type="SMR" id="A9MZN3"/>
<dbReference type="KEGG" id="spq:SPAB_00176"/>
<dbReference type="PATRIC" id="fig|1016998.12.peg.168"/>
<dbReference type="HOGENOM" id="CLU_022552_5_3_6"/>
<dbReference type="BioCyc" id="SENT1016998:SPAB_RS00710-MONOMER"/>
<dbReference type="Proteomes" id="UP000008556">
    <property type="component" value="Chromosome"/>
</dbReference>
<dbReference type="GO" id="GO:0005829">
    <property type="term" value="C:cytosol"/>
    <property type="evidence" value="ECO:0007669"/>
    <property type="project" value="TreeGrafter"/>
</dbReference>
<dbReference type="GO" id="GO:1902560">
    <property type="term" value="C:GMP reductase complex"/>
    <property type="evidence" value="ECO:0007669"/>
    <property type="project" value="InterPro"/>
</dbReference>
<dbReference type="GO" id="GO:0003920">
    <property type="term" value="F:GMP reductase activity"/>
    <property type="evidence" value="ECO:0007669"/>
    <property type="project" value="UniProtKB-UniRule"/>
</dbReference>
<dbReference type="GO" id="GO:0046872">
    <property type="term" value="F:metal ion binding"/>
    <property type="evidence" value="ECO:0007669"/>
    <property type="project" value="UniProtKB-KW"/>
</dbReference>
<dbReference type="GO" id="GO:0006163">
    <property type="term" value="P:purine nucleotide metabolic process"/>
    <property type="evidence" value="ECO:0007669"/>
    <property type="project" value="UniProtKB-UniRule"/>
</dbReference>
<dbReference type="CDD" id="cd00381">
    <property type="entry name" value="IMPDH"/>
    <property type="match status" value="1"/>
</dbReference>
<dbReference type="FunFam" id="3.20.20.70:FF:000012">
    <property type="entry name" value="GMP reductase"/>
    <property type="match status" value="1"/>
</dbReference>
<dbReference type="Gene3D" id="3.20.20.70">
    <property type="entry name" value="Aldolase class I"/>
    <property type="match status" value="1"/>
</dbReference>
<dbReference type="HAMAP" id="MF_00596">
    <property type="entry name" value="GMP_reduct_type1"/>
    <property type="match status" value="1"/>
</dbReference>
<dbReference type="InterPro" id="IPR013785">
    <property type="entry name" value="Aldolase_TIM"/>
</dbReference>
<dbReference type="InterPro" id="IPR050139">
    <property type="entry name" value="GMP_reductase"/>
</dbReference>
<dbReference type="InterPro" id="IPR005993">
    <property type="entry name" value="GMPR"/>
</dbReference>
<dbReference type="InterPro" id="IPR015875">
    <property type="entry name" value="IMP_DH/GMP_Rdtase_CS"/>
</dbReference>
<dbReference type="InterPro" id="IPR001093">
    <property type="entry name" value="IMP_DH_GMPRt"/>
</dbReference>
<dbReference type="NCBIfam" id="TIGR01305">
    <property type="entry name" value="GMP_reduct_1"/>
    <property type="match status" value="1"/>
</dbReference>
<dbReference type="NCBIfam" id="NF003470">
    <property type="entry name" value="PRK05096.1"/>
    <property type="match status" value="1"/>
</dbReference>
<dbReference type="PANTHER" id="PTHR43170">
    <property type="entry name" value="GMP REDUCTASE"/>
    <property type="match status" value="1"/>
</dbReference>
<dbReference type="PANTHER" id="PTHR43170:SF5">
    <property type="entry name" value="GMP REDUCTASE"/>
    <property type="match status" value="1"/>
</dbReference>
<dbReference type="Pfam" id="PF00478">
    <property type="entry name" value="IMPDH"/>
    <property type="match status" value="1"/>
</dbReference>
<dbReference type="PIRSF" id="PIRSF000235">
    <property type="entry name" value="GMP_reductase"/>
    <property type="match status" value="1"/>
</dbReference>
<dbReference type="SMART" id="SM01240">
    <property type="entry name" value="IMPDH"/>
    <property type="match status" value="1"/>
</dbReference>
<dbReference type="SUPFAM" id="SSF51412">
    <property type="entry name" value="Inosine monophosphate dehydrogenase (IMPDH)"/>
    <property type="match status" value="1"/>
</dbReference>
<dbReference type="PROSITE" id="PS00487">
    <property type="entry name" value="IMP_DH_GMP_RED"/>
    <property type="match status" value="1"/>
</dbReference>
<evidence type="ECO:0000255" key="1">
    <source>
        <dbReference type="HAMAP-Rule" id="MF_00596"/>
    </source>
</evidence>
<comment type="function">
    <text evidence="1">Catalyzes the irreversible NADPH-dependent deamination of GMP to IMP. It functions in the conversion of nucleobase, nucleoside and nucleotide derivatives of G to A nucleotides, and in maintaining the intracellular balance of A and G nucleotides.</text>
</comment>
<comment type="catalytic activity">
    <reaction evidence="1">
        <text>IMP + NH4(+) + NADP(+) = GMP + NADPH + 2 H(+)</text>
        <dbReference type="Rhea" id="RHEA:17185"/>
        <dbReference type="ChEBI" id="CHEBI:15378"/>
        <dbReference type="ChEBI" id="CHEBI:28938"/>
        <dbReference type="ChEBI" id="CHEBI:57783"/>
        <dbReference type="ChEBI" id="CHEBI:58053"/>
        <dbReference type="ChEBI" id="CHEBI:58115"/>
        <dbReference type="ChEBI" id="CHEBI:58349"/>
        <dbReference type="EC" id="1.7.1.7"/>
    </reaction>
</comment>
<comment type="subunit">
    <text evidence="1">Homotetramer.</text>
</comment>
<comment type="similarity">
    <text evidence="1">Belongs to the IMPDH/GMPR family. GuaC type 1 subfamily.</text>
</comment>
<sequence>MRIEEDLKLGFKDVLIRPKRSTLKSRSDVELERQFTFKHSGQTWSGVPIIAANMDTVGTFEMAQALAGFDILTAVHKHYTVEEWAAFINTASADVLKHVMVSTGTSDADFEKTVQILALDPALNFVCIDVANGYSEHFVQFVAKAREAWPTKTICAGNVVTGEMCEELILSGADIVKVGIGPGSVCTTRVKTGVGYPQLSAVIECADAAHGLGGMIVSDGGCTMPGDVAKAFGGGADFVMLGGMLAGHEESGGSVVEENGEKFMLFYGMSSESAMNRHVGGVAKYRAAEGKTVKLPLRGPVGNTARDILGGLRSACTYVGASRLKELTKRTTFIRVQEQENRIFNSL</sequence>
<organism>
    <name type="scientific">Salmonella paratyphi B (strain ATCC BAA-1250 / SPB7)</name>
    <dbReference type="NCBI Taxonomy" id="1016998"/>
    <lineage>
        <taxon>Bacteria</taxon>
        <taxon>Pseudomonadati</taxon>
        <taxon>Pseudomonadota</taxon>
        <taxon>Gammaproteobacteria</taxon>
        <taxon>Enterobacterales</taxon>
        <taxon>Enterobacteriaceae</taxon>
        <taxon>Salmonella</taxon>
    </lineage>
</organism>
<protein>
    <recommendedName>
        <fullName evidence="1">GMP reductase</fullName>
        <ecNumber evidence="1">1.7.1.7</ecNumber>
    </recommendedName>
    <alternativeName>
        <fullName evidence="1">Guanosine 5'-monophosphate oxidoreductase</fullName>
        <shortName evidence="1">Guanosine monophosphate reductase</shortName>
    </alternativeName>
</protein>